<proteinExistence type="inferred from homology"/>
<reference key="1">
    <citation type="journal article" date="2005" name="Arch. Microbiol.">
        <title>bac genes for recombinant bacilysin and anticapsin production in Bacillus host strains.</title>
        <authorList>
            <person name="Steinborn G."/>
            <person name="Hajirezaei M.-R."/>
            <person name="Hofemeister J."/>
        </authorList>
    </citation>
    <scope>NUCLEOTIDE SEQUENCE [GENOMIC DNA]</scope>
    <source>
        <strain>ATCC 15841</strain>
    </source>
</reference>
<dbReference type="EC" id="4.1.1.100" evidence="1"/>
<dbReference type="EMBL" id="AF396779">
    <property type="protein sequence ID" value="AAM90573.1"/>
    <property type="molecule type" value="Genomic_DNA"/>
</dbReference>
<dbReference type="RefSeq" id="WP_014471186.1">
    <property type="nucleotide sequence ID" value="NZ_VRTX01000001.1"/>
</dbReference>
<dbReference type="SMR" id="Q8KWT1"/>
<dbReference type="STRING" id="692420.BAMF_3607"/>
<dbReference type="PATRIC" id="fig|1390.176.peg.1783"/>
<dbReference type="eggNOG" id="COG0077">
    <property type="taxonomic scope" value="Bacteria"/>
</dbReference>
<dbReference type="OrthoDB" id="490158at2"/>
<dbReference type="BRENDA" id="5.3.3.19">
    <property type="organism ID" value="630"/>
</dbReference>
<dbReference type="UniPathway" id="UPA00100"/>
<dbReference type="GO" id="GO:0005737">
    <property type="term" value="C:cytoplasm"/>
    <property type="evidence" value="ECO:0007669"/>
    <property type="project" value="UniProtKB-SubCell"/>
</dbReference>
<dbReference type="GO" id="GO:0016831">
    <property type="term" value="F:carboxy-lyase activity"/>
    <property type="evidence" value="ECO:0000250"/>
    <property type="project" value="UniProtKB"/>
</dbReference>
<dbReference type="GO" id="GO:0017000">
    <property type="term" value="P:antibiotic biosynthetic process"/>
    <property type="evidence" value="ECO:0000250"/>
    <property type="project" value="UniProtKB"/>
</dbReference>
<dbReference type="Gene3D" id="3.40.190.10">
    <property type="entry name" value="Periplasmic binding protein-like II"/>
    <property type="match status" value="1"/>
</dbReference>
<dbReference type="SUPFAM" id="SSF53850">
    <property type="entry name" value="Periplasmic binding protein-like II"/>
    <property type="match status" value="1"/>
</dbReference>
<gene>
    <name evidence="1" type="primary">bacA</name>
</gene>
<keyword id="KW-0045">Antibiotic biosynthesis</keyword>
<keyword id="KW-0963">Cytoplasm</keyword>
<keyword id="KW-0456">Lyase</keyword>
<protein>
    <recommendedName>
        <fullName evidence="1">Prephenate decarboxylase</fullName>
        <ecNumber evidence="1">4.1.1.100</ecNumber>
    </recommendedName>
    <alternativeName>
        <fullName evidence="1">Bacilysin biosynthesis protein BacA</fullName>
    </alternativeName>
    <alternativeName>
        <fullName evidence="1">Non-aromatizing prephenate decarboxylase</fullName>
    </alternativeName>
</protein>
<feature type="chain" id="PRO_0000064796" description="Prephenate decarboxylase">
    <location>
        <begin position="1"/>
        <end position="204"/>
    </location>
</feature>
<organism>
    <name type="scientific">Bacillus amyloliquefaciens</name>
    <name type="common">Bacillus velezensis</name>
    <dbReference type="NCBI Taxonomy" id="1390"/>
    <lineage>
        <taxon>Bacteria</taxon>
        <taxon>Bacillati</taxon>
        <taxon>Bacillota</taxon>
        <taxon>Bacilli</taxon>
        <taxon>Bacillales</taxon>
        <taxon>Bacillaceae</taxon>
        <taxon>Bacillus</taxon>
        <taxon>Bacillus amyloliquefaciens group</taxon>
    </lineage>
</organism>
<accession>Q8KWT1</accession>
<comment type="function">
    <text evidence="1">Part of the bacABCDEF operon responsible for the biosynthesis of the nonribosomally synthesized dipeptide antibiotic bacilysin, composed of L-alanine and L-anticapsin. Bacilysin is an irreversible inactivator of the glutaminase domain of glucosamine synthetase. BacA is an unusual prephenate decarboxylase that avoids the typical aromatization of the cyclohexadienol ring of prephenate. BacA catalyzes the protonation of prephenate (1-carboxy-4-hydroxy-alpha-oxo-2,5-cyclohexadiene-1-propanoic acid) at C6 position, followed by a decarboxylation to produce the endocyclic-delta(4),delta(8)-7R-dihydro-hydroxyphenylpyruvate (en-H2HPP). En-H2HPP is able to undergo a slow nonenzymatic isomerization to produce the exocyclic-delta(3),delta(5)-dihydro-hydroxyphenylpyruvate (ex-H2HPP). BacA isomerizes only the pro-R double bond in prephenate.</text>
</comment>
<comment type="catalytic activity">
    <reaction evidence="1">
        <text>prephenate + H(+) = 3-[(4R)-4-hydroxycyclohexa-1,5-dien-1-yl]-2-oxopropanoate + CO2</text>
        <dbReference type="Rhea" id="RHEA:33499"/>
        <dbReference type="ChEBI" id="CHEBI:15378"/>
        <dbReference type="ChEBI" id="CHEBI:16526"/>
        <dbReference type="ChEBI" id="CHEBI:29934"/>
        <dbReference type="ChEBI" id="CHEBI:84354"/>
        <dbReference type="EC" id="4.1.1.100"/>
    </reaction>
</comment>
<comment type="pathway">
    <text evidence="1">Antibiotic biosynthesis; bacilysin biosynthesis.</text>
</comment>
<comment type="subcellular location">
    <subcellularLocation>
        <location evidence="2">Cytoplasm</location>
    </subcellularLocation>
</comment>
<comment type="similarity">
    <text evidence="1">Belongs to the prephenate decarboxylase family.</text>
</comment>
<sequence length="204" mass="23071">MIILDNSIQTKSKAYSISKLITINTLGPEGTSSEYAAKNFITNFTLLQGVNSKLSLHDTFESCIEKTLQSPLEYTIVPHAYDGIKHFYMRPDLQLLQIFRCDTPMYGLAVRPDFEYTDDMLDKAVIVSHPSPINLIKYFTRKDVTFDLVNSTSAAAKRVKDGLSDIALTNELARQKYGLQFVKTFKSIPMSWSLFGKGEIHDEN</sequence>
<evidence type="ECO:0000250" key="1">
    <source>
        <dbReference type="UniProtKB" id="P39638"/>
    </source>
</evidence>
<evidence type="ECO:0000305" key="2"/>
<name>BACA_BACAM</name>